<dbReference type="EC" id="4.3.2.10" evidence="1"/>
<dbReference type="EC" id="3.5.1.2" evidence="1"/>
<dbReference type="EMBL" id="AE014299">
    <property type="protein sequence ID" value="AAN55117.1"/>
    <property type="molecule type" value="Genomic_DNA"/>
</dbReference>
<dbReference type="RefSeq" id="NP_717673.1">
    <property type="nucleotide sequence ID" value="NC_004347.2"/>
</dbReference>
<dbReference type="RefSeq" id="WP_011072137.1">
    <property type="nucleotide sequence ID" value="NC_004347.2"/>
</dbReference>
<dbReference type="SMR" id="Q8EFB4"/>
<dbReference type="STRING" id="211586.SO_2070"/>
<dbReference type="PaxDb" id="211586-SO_2070"/>
<dbReference type="KEGG" id="son:SO_2070"/>
<dbReference type="PATRIC" id="fig|211586.12.peg.1988"/>
<dbReference type="eggNOG" id="COG0118">
    <property type="taxonomic scope" value="Bacteria"/>
</dbReference>
<dbReference type="HOGENOM" id="CLU_071837_0_0_6"/>
<dbReference type="OrthoDB" id="9807137at2"/>
<dbReference type="PhylomeDB" id="Q8EFB4"/>
<dbReference type="BioCyc" id="SONE211586:G1GMP-1903-MONOMER"/>
<dbReference type="UniPathway" id="UPA00031">
    <property type="reaction ID" value="UER00010"/>
</dbReference>
<dbReference type="Proteomes" id="UP000008186">
    <property type="component" value="Chromosome"/>
</dbReference>
<dbReference type="GO" id="GO:0005737">
    <property type="term" value="C:cytoplasm"/>
    <property type="evidence" value="ECO:0007669"/>
    <property type="project" value="UniProtKB-SubCell"/>
</dbReference>
<dbReference type="GO" id="GO:0004359">
    <property type="term" value="F:glutaminase activity"/>
    <property type="evidence" value="ECO:0007669"/>
    <property type="project" value="UniProtKB-EC"/>
</dbReference>
<dbReference type="GO" id="GO:0000107">
    <property type="term" value="F:imidazoleglycerol-phosphate synthase activity"/>
    <property type="evidence" value="ECO:0000318"/>
    <property type="project" value="GO_Central"/>
</dbReference>
<dbReference type="GO" id="GO:0016829">
    <property type="term" value="F:lyase activity"/>
    <property type="evidence" value="ECO:0007669"/>
    <property type="project" value="UniProtKB-KW"/>
</dbReference>
<dbReference type="GO" id="GO:0000105">
    <property type="term" value="P:L-histidine biosynthetic process"/>
    <property type="evidence" value="ECO:0007669"/>
    <property type="project" value="UniProtKB-UniRule"/>
</dbReference>
<dbReference type="CDD" id="cd01748">
    <property type="entry name" value="GATase1_IGP_Synthase"/>
    <property type="match status" value="1"/>
</dbReference>
<dbReference type="FunFam" id="3.40.50.880:FF:000009">
    <property type="entry name" value="Imidazole glycerol phosphate synthase subunit HisH"/>
    <property type="match status" value="1"/>
</dbReference>
<dbReference type="Gene3D" id="3.40.50.880">
    <property type="match status" value="1"/>
</dbReference>
<dbReference type="HAMAP" id="MF_00278">
    <property type="entry name" value="HisH"/>
    <property type="match status" value="1"/>
</dbReference>
<dbReference type="InterPro" id="IPR029062">
    <property type="entry name" value="Class_I_gatase-like"/>
</dbReference>
<dbReference type="InterPro" id="IPR017926">
    <property type="entry name" value="GATASE"/>
</dbReference>
<dbReference type="InterPro" id="IPR010139">
    <property type="entry name" value="Imidazole-glycPsynth_HisH"/>
</dbReference>
<dbReference type="NCBIfam" id="TIGR01855">
    <property type="entry name" value="IMP_synth_hisH"/>
    <property type="match status" value="1"/>
</dbReference>
<dbReference type="PANTHER" id="PTHR42701">
    <property type="entry name" value="IMIDAZOLE GLYCEROL PHOSPHATE SYNTHASE SUBUNIT HISH"/>
    <property type="match status" value="1"/>
</dbReference>
<dbReference type="PANTHER" id="PTHR42701:SF1">
    <property type="entry name" value="IMIDAZOLE GLYCEROL PHOSPHATE SYNTHASE SUBUNIT HISH"/>
    <property type="match status" value="1"/>
</dbReference>
<dbReference type="Pfam" id="PF00117">
    <property type="entry name" value="GATase"/>
    <property type="match status" value="1"/>
</dbReference>
<dbReference type="PIRSF" id="PIRSF000495">
    <property type="entry name" value="Amidotransf_hisH"/>
    <property type="match status" value="1"/>
</dbReference>
<dbReference type="SUPFAM" id="SSF52317">
    <property type="entry name" value="Class I glutamine amidotransferase-like"/>
    <property type="match status" value="1"/>
</dbReference>
<dbReference type="PROSITE" id="PS51273">
    <property type="entry name" value="GATASE_TYPE_1"/>
    <property type="match status" value="1"/>
</dbReference>
<name>HIS5_SHEON</name>
<feature type="chain" id="PRO_0000152420" description="Imidazole glycerol phosphate synthase subunit HisH">
    <location>
        <begin position="1"/>
        <end position="221"/>
    </location>
</feature>
<feature type="domain" description="Glutamine amidotransferase type-1" evidence="1">
    <location>
        <begin position="9"/>
        <end position="221"/>
    </location>
</feature>
<feature type="active site" description="Nucleophile" evidence="1">
    <location>
        <position position="84"/>
    </location>
</feature>
<feature type="active site" evidence="1">
    <location>
        <position position="202"/>
    </location>
</feature>
<feature type="active site" evidence="1">
    <location>
        <position position="204"/>
    </location>
</feature>
<keyword id="KW-0028">Amino-acid biosynthesis</keyword>
<keyword id="KW-0963">Cytoplasm</keyword>
<keyword id="KW-0315">Glutamine amidotransferase</keyword>
<keyword id="KW-0368">Histidine biosynthesis</keyword>
<keyword id="KW-0378">Hydrolase</keyword>
<keyword id="KW-0456">Lyase</keyword>
<keyword id="KW-1185">Reference proteome</keyword>
<comment type="function">
    <text evidence="1">IGPS catalyzes the conversion of PRFAR and glutamine to IGP, AICAR and glutamate. The HisH subunit catalyzes the hydrolysis of glutamine to glutamate and ammonia as part of the synthesis of IGP and AICAR. The resulting ammonia molecule is channeled to the active site of HisF.</text>
</comment>
<comment type="catalytic activity">
    <reaction evidence="1">
        <text>5-[(5-phospho-1-deoxy-D-ribulos-1-ylimino)methylamino]-1-(5-phospho-beta-D-ribosyl)imidazole-4-carboxamide + L-glutamine = D-erythro-1-(imidazol-4-yl)glycerol 3-phosphate + 5-amino-1-(5-phospho-beta-D-ribosyl)imidazole-4-carboxamide + L-glutamate + H(+)</text>
        <dbReference type="Rhea" id="RHEA:24793"/>
        <dbReference type="ChEBI" id="CHEBI:15378"/>
        <dbReference type="ChEBI" id="CHEBI:29985"/>
        <dbReference type="ChEBI" id="CHEBI:58278"/>
        <dbReference type="ChEBI" id="CHEBI:58359"/>
        <dbReference type="ChEBI" id="CHEBI:58475"/>
        <dbReference type="ChEBI" id="CHEBI:58525"/>
        <dbReference type="EC" id="4.3.2.10"/>
    </reaction>
</comment>
<comment type="catalytic activity">
    <reaction evidence="1">
        <text>L-glutamine + H2O = L-glutamate + NH4(+)</text>
        <dbReference type="Rhea" id="RHEA:15889"/>
        <dbReference type="ChEBI" id="CHEBI:15377"/>
        <dbReference type="ChEBI" id="CHEBI:28938"/>
        <dbReference type="ChEBI" id="CHEBI:29985"/>
        <dbReference type="ChEBI" id="CHEBI:58359"/>
        <dbReference type="EC" id="3.5.1.2"/>
    </reaction>
</comment>
<comment type="pathway">
    <text evidence="1">Amino-acid biosynthesis; L-histidine biosynthesis; L-histidine from 5-phospho-alpha-D-ribose 1-diphosphate: step 5/9.</text>
</comment>
<comment type="subunit">
    <text evidence="1">Heterodimer of HisH and HisF.</text>
</comment>
<comment type="subcellular location">
    <subcellularLocation>
        <location evidence="1">Cytoplasm</location>
    </subcellularLocation>
</comment>
<proteinExistence type="inferred from homology"/>
<reference key="1">
    <citation type="journal article" date="2002" name="Nat. Biotechnol.">
        <title>Genome sequence of the dissimilatory metal ion-reducing bacterium Shewanella oneidensis.</title>
        <authorList>
            <person name="Heidelberg J.F."/>
            <person name="Paulsen I.T."/>
            <person name="Nelson K.E."/>
            <person name="Gaidos E.J."/>
            <person name="Nelson W.C."/>
            <person name="Read T.D."/>
            <person name="Eisen J.A."/>
            <person name="Seshadri R."/>
            <person name="Ward N.L."/>
            <person name="Methe B.A."/>
            <person name="Clayton R.A."/>
            <person name="Meyer T."/>
            <person name="Tsapin A."/>
            <person name="Scott J."/>
            <person name="Beanan M.J."/>
            <person name="Brinkac L.M."/>
            <person name="Daugherty S.C."/>
            <person name="DeBoy R.T."/>
            <person name="Dodson R.J."/>
            <person name="Durkin A.S."/>
            <person name="Haft D.H."/>
            <person name="Kolonay J.F."/>
            <person name="Madupu R."/>
            <person name="Peterson J.D."/>
            <person name="Umayam L.A."/>
            <person name="White O."/>
            <person name="Wolf A.M."/>
            <person name="Vamathevan J.J."/>
            <person name="Weidman J.F."/>
            <person name="Impraim M."/>
            <person name="Lee K."/>
            <person name="Berry K.J."/>
            <person name="Lee C."/>
            <person name="Mueller J."/>
            <person name="Khouri H.M."/>
            <person name="Gill J."/>
            <person name="Utterback T.R."/>
            <person name="McDonald L.A."/>
            <person name="Feldblyum T.V."/>
            <person name="Smith H.O."/>
            <person name="Venter J.C."/>
            <person name="Nealson K.H."/>
            <person name="Fraser C.M."/>
        </authorList>
    </citation>
    <scope>NUCLEOTIDE SEQUENCE [LARGE SCALE GENOMIC DNA]</scope>
    <source>
        <strain>ATCC 700550 / JCM 31522 / CIP 106686 / LMG 19005 / NCIMB 14063 / MR-1</strain>
    </source>
</reference>
<organism>
    <name type="scientific">Shewanella oneidensis (strain ATCC 700550 / JCM 31522 / CIP 106686 / LMG 19005 / NCIMB 14063 / MR-1)</name>
    <dbReference type="NCBI Taxonomy" id="211586"/>
    <lineage>
        <taxon>Bacteria</taxon>
        <taxon>Pseudomonadati</taxon>
        <taxon>Pseudomonadota</taxon>
        <taxon>Gammaproteobacteria</taxon>
        <taxon>Alteromonadales</taxon>
        <taxon>Shewanellaceae</taxon>
        <taxon>Shewanella</taxon>
    </lineage>
</organism>
<evidence type="ECO:0000255" key="1">
    <source>
        <dbReference type="HAMAP-Rule" id="MF_00278"/>
    </source>
</evidence>
<sequence>MSANTDEFDVVIIDTGCANLSSVRFAFERLGANVLVTDDKASIKAAKRVVLPGVGSAGAAMASLTEKALVELIQGLTQPVLGVCLGMQMLTLLSKERGGQALDCQAHDCKCLGIIPTEIDELNSQTLKAEGLPLPHMGWNQLTFSNPSQVHPLFAGVEAGSYVYFVHSYRAPLSDYTLAQCRYGEDFSAAIGKDNFMGVQFHPEKSAAVGAQILGNFLKMQ</sequence>
<protein>
    <recommendedName>
        <fullName evidence="1">Imidazole glycerol phosphate synthase subunit HisH</fullName>
        <ecNumber evidence="1">4.3.2.10</ecNumber>
    </recommendedName>
    <alternativeName>
        <fullName evidence="1">IGP synthase glutaminase subunit</fullName>
        <ecNumber evidence="1">3.5.1.2</ecNumber>
    </alternativeName>
    <alternativeName>
        <fullName evidence="1">IGP synthase subunit HisH</fullName>
    </alternativeName>
    <alternativeName>
        <fullName evidence="1">ImGP synthase subunit HisH</fullName>
        <shortName evidence="1">IGPS subunit HisH</shortName>
    </alternativeName>
</protein>
<gene>
    <name evidence="1" type="primary">hisH</name>
    <name type="ordered locus">SO_2070</name>
</gene>
<accession>Q8EFB4</accession>